<gene>
    <name evidence="1" type="primary">sucC</name>
    <name type="ordered locus">COXBURSA331_A1557</name>
</gene>
<name>SUCC_COXBR</name>
<organism>
    <name type="scientific">Coxiella burnetii (strain RSA 331 / Henzerling II)</name>
    <dbReference type="NCBI Taxonomy" id="360115"/>
    <lineage>
        <taxon>Bacteria</taxon>
        <taxon>Pseudomonadati</taxon>
        <taxon>Pseudomonadota</taxon>
        <taxon>Gammaproteobacteria</taxon>
        <taxon>Legionellales</taxon>
        <taxon>Coxiellaceae</taxon>
        <taxon>Coxiella</taxon>
    </lineage>
</organism>
<evidence type="ECO:0000255" key="1">
    <source>
        <dbReference type="HAMAP-Rule" id="MF_00558"/>
    </source>
</evidence>
<accession>A9N8R8</accession>
<proteinExistence type="inferred from homology"/>
<reference key="1">
    <citation type="submission" date="2007-11" db="EMBL/GenBank/DDBJ databases">
        <title>Genome sequencing of phylogenetically and phenotypically diverse Coxiella burnetii isolates.</title>
        <authorList>
            <person name="Seshadri R."/>
            <person name="Samuel J.E."/>
        </authorList>
    </citation>
    <scope>NUCLEOTIDE SEQUENCE [LARGE SCALE GENOMIC DNA]</scope>
    <source>
        <strain>RSA 331 / Henzerling II</strain>
    </source>
</reference>
<sequence length="390" mass="42391">MNLHEYQSKHLLKKYNIPVPASEVVFNPDAAVDAAAKIGGDRWVVKAQVHAGGRGKAGGVRLVKNKEELKSAVKALLGTRLVTYQTDERGQPVNQILVEQTSDIARELYLGAVIDRASQRIVFMASTEGGVEIEKVAEKSPEKILKVTIDPAIGLQPFQCRQLFFGLGLQDLKQMRSFTDIVMGLYRLFTERDLSLLEINPLVITGSGELICLDAKINIDDSALYRQSELREMRDTTQEDEHETMAQQWELNYIKLDGNIGCMVNGAGLAMATMDLIKLSGGDPANFLDVGGSATKERVTEAFKIIVSDKNVKGILVNIFGGIVRCDLIADGIISAVKEVGIDVPVVVRLEGNNAQLGAKKLADSDMNIIAAKGFADAAEQIVKQVGVIA</sequence>
<protein>
    <recommendedName>
        <fullName evidence="1">Succinate--CoA ligase [ADP-forming] subunit beta</fullName>
        <ecNumber evidence="1">6.2.1.5</ecNumber>
    </recommendedName>
    <alternativeName>
        <fullName evidence="1">Succinyl-CoA synthetase subunit beta</fullName>
        <shortName evidence="1">SCS-beta</shortName>
    </alternativeName>
</protein>
<keyword id="KW-0067">ATP-binding</keyword>
<keyword id="KW-0436">Ligase</keyword>
<keyword id="KW-0460">Magnesium</keyword>
<keyword id="KW-0479">Metal-binding</keyword>
<keyword id="KW-0547">Nucleotide-binding</keyword>
<keyword id="KW-0816">Tricarboxylic acid cycle</keyword>
<comment type="function">
    <text evidence="1">Succinyl-CoA synthetase functions in the citric acid cycle (TCA), coupling the hydrolysis of succinyl-CoA to the synthesis of either ATP or GTP and thus represents the only step of substrate-level phosphorylation in the TCA. The beta subunit provides nucleotide specificity of the enzyme and binds the substrate succinate, while the binding sites for coenzyme A and phosphate are found in the alpha subunit.</text>
</comment>
<comment type="catalytic activity">
    <reaction evidence="1">
        <text>succinate + ATP + CoA = succinyl-CoA + ADP + phosphate</text>
        <dbReference type="Rhea" id="RHEA:17661"/>
        <dbReference type="ChEBI" id="CHEBI:30031"/>
        <dbReference type="ChEBI" id="CHEBI:30616"/>
        <dbReference type="ChEBI" id="CHEBI:43474"/>
        <dbReference type="ChEBI" id="CHEBI:57287"/>
        <dbReference type="ChEBI" id="CHEBI:57292"/>
        <dbReference type="ChEBI" id="CHEBI:456216"/>
        <dbReference type="EC" id="6.2.1.5"/>
    </reaction>
    <physiologicalReaction direction="right-to-left" evidence="1">
        <dbReference type="Rhea" id="RHEA:17663"/>
    </physiologicalReaction>
</comment>
<comment type="catalytic activity">
    <reaction evidence="1">
        <text>GTP + succinate + CoA = succinyl-CoA + GDP + phosphate</text>
        <dbReference type="Rhea" id="RHEA:22120"/>
        <dbReference type="ChEBI" id="CHEBI:30031"/>
        <dbReference type="ChEBI" id="CHEBI:37565"/>
        <dbReference type="ChEBI" id="CHEBI:43474"/>
        <dbReference type="ChEBI" id="CHEBI:57287"/>
        <dbReference type="ChEBI" id="CHEBI:57292"/>
        <dbReference type="ChEBI" id="CHEBI:58189"/>
    </reaction>
    <physiologicalReaction direction="right-to-left" evidence="1">
        <dbReference type="Rhea" id="RHEA:22122"/>
    </physiologicalReaction>
</comment>
<comment type="cofactor">
    <cofactor evidence="1">
        <name>Mg(2+)</name>
        <dbReference type="ChEBI" id="CHEBI:18420"/>
    </cofactor>
    <text evidence="1">Binds 1 Mg(2+) ion per subunit.</text>
</comment>
<comment type="pathway">
    <text evidence="1">Carbohydrate metabolism; tricarboxylic acid cycle; succinate from succinyl-CoA (ligase route): step 1/1.</text>
</comment>
<comment type="subunit">
    <text evidence="1">Heterotetramer of two alpha and two beta subunits.</text>
</comment>
<comment type="similarity">
    <text evidence="1">Belongs to the succinate/malate CoA ligase beta subunit family.</text>
</comment>
<feature type="chain" id="PRO_1000082068" description="Succinate--CoA ligase [ADP-forming] subunit beta">
    <location>
        <begin position="1"/>
        <end position="390"/>
    </location>
</feature>
<feature type="domain" description="ATP-grasp" evidence="1">
    <location>
        <begin position="9"/>
        <end position="245"/>
    </location>
</feature>
<feature type="binding site" evidence="1">
    <location>
        <position position="46"/>
    </location>
    <ligand>
        <name>ATP</name>
        <dbReference type="ChEBI" id="CHEBI:30616"/>
    </ligand>
</feature>
<feature type="binding site" evidence="1">
    <location>
        <begin position="53"/>
        <end position="55"/>
    </location>
    <ligand>
        <name>ATP</name>
        <dbReference type="ChEBI" id="CHEBI:30616"/>
    </ligand>
</feature>
<feature type="binding site" evidence="1">
    <location>
        <position position="99"/>
    </location>
    <ligand>
        <name>ATP</name>
        <dbReference type="ChEBI" id="CHEBI:30616"/>
    </ligand>
</feature>
<feature type="binding site" evidence="1">
    <location>
        <position position="102"/>
    </location>
    <ligand>
        <name>ATP</name>
        <dbReference type="ChEBI" id="CHEBI:30616"/>
    </ligand>
</feature>
<feature type="binding site" evidence="1">
    <location>
        <position position="107"/>
    </location>
    <ligand>
        <name>ATP</name>
        <dbReference type="ChEBI" id="CHEBI:30616"/>
    </ligand>
</feature>
<feature type="binding site" evidence="1">
    <location>
        <position position="200"/>
    </location>
    <ligand>
        <name>Mg(2+)</name>
        <dbReference type="ChEBI" id="CHEBI:18420"/>
    </ligand>
</feature>
<feature type="binding site" evidence="1">
    <location>
        <position position="214"/>
    </location>
    <ligand>
        <name>Mg(2+)</name>
        <dbReference type="ChEBI" id="CHEBI:18420"/>
    </ligand>
</feature>
<feature type="binding site" evidence="1">
    <location>
        <position position="265"/>
    </location>
    <ligand>
        <name>substrate</name>
        <note>ligand shared with subunit alpha</note>
    </ligand>
</feature>
<feature type="binding site" evidence="1">
    <location>
        <begin position="322"/>
        <end position="324"/>
    </location>
    <ligand>
        <name>substrate</name>
        <note>ligand shared with subunit alpha</note>
    </ligand>
</feature>
<dbReference type="EC" id="6.2.1.5" evidence="1"/>
<dbReference type="EMBL" id="CP000890">
    <property type="protein sequence ID" value="ABX77796.1"/>
    <property type="molecule type" value="Genomic_DNA"/>
</dbReference>
<dbReference type="RefSeq" id="WP_012220638.1">
    <property type="nucleotide sequence ID" value="NC_010117.1"/>
</dbReference>
<dbReference type="SMR" id="A9N8R8"/>
<dbReference type="KEGG" id="cbs:COXBURSA331_A1557"/>
<dbReference type="HOGENOM" id="CLU_037430_0_2_6"/>
<dbReference type="UniPathway" id="UPA00223">
    <property type="reaction ID" value="UER00999"/>
</dbReference>
<dbReference type="GO" id="GO:0005829">
    <property type="term" value="C:cytosol"/>
    <property type="evidence" value="ECO:0007669"/>
    <property type="project" value="TreeGrafter"/>
</dbReference>
<dbReference type="GO" id="GO:0042709">
    <property type="term" value="C:succinate-CoA ligase complex"/>
    <property type="evidence" value="ECO:0007669"/>
    <property type="project" value="TreeGrafter"/>
</dbReference>
<dbReference type="GO" id="GO:0005524">
    <property type="term" value="F:ATP binding"/>
    <property type="evidence" value="ECO:0007669"/>
    <property type="project" value="UniProtKB-UniRule"/>
</dbReference>
<dbReference type="GO" id="GO:0000287">
    <property type="term" value="F:magnesium ion binding"/>
    <property type="evidence" value="ECO:0007669"/>
    <property type="project" value="UniProtKB-UniRule"/>
</dbReference>
<dbReference type="GO" id="GO:0004775">
    <property type="term" value="F:succinate-CoA ligase (ADP-forming) activity"/>
    <property type="evidence" value="ECO:0007669"/>
    <property type="project" value="UniProtKB-UniRule"/>
</dbReference>
<dbReference type="GO" id="GO:0004776">
    <property type="term" value="F:succinate-CoA ligase (GDP-forming) activity"/>
    <property type="evidence" value="ECO:0007669"/>
    <property type="project" value="RHEA"/>
</dbReference>
<dbReference type="GO" id="GO:0006104">
    <property type="term" value="P:succinyl-CoA metabolic process"/>
    <property type="evidence" value="ECO:0007669"/>
    <property type="project" value="TreeGrafter"/>
</dbReference>
<dbReference type="GO" id="GO:0006099">
    <property type="term" value="P:tricarboxylic acid cycle"/>
    <property type="evidence" value="ECO:0007669"/>
    <property type="project" value="UniProtKB-UniRule"/>
</dbReference>
<dbReference type="FunFam" id="3.30.1490.20:FF:000002">
    <property type="entry name" value="Succinate--CoA ligase [ADP-forming] subunit beta"/>
    <property type="match status" value="1"/>
</dbReference>
<dbReference type="FunFam" id="3.30.470.20:FF:000002">
    <property type="entry name" value="Succinate--CoA ligase [ADP-forming] subunit beta"/>
    <property type="match status" value="1"/>
</dbReference>
<dbReference type="FunFam" id="3.40.50.261:FF:000001">
    <property type="entry name" value="Succinate--CoA ligase [ADP-forming] subunit beta"/>
    <property type="match status" value="1"/>
</dbReference>
<dbReference type="Gene3D" id="3.30.1490.20">
    <property type="entry name" value="ATP-grasp fold, A domain"/>
    <property type="match status" value="1"/>
</dbReference>
<dbReference type="Gene3D" id="3.30.470.20">
    <property type="entry name" value="ATP-grasp fold, B domain"/>
    <property type="match status" value="1"/>
</dbReference>
<dbReference type="Gene3D" id="3.40.50.261">
    <property type="entry name" value="Succinyl-CoA synthetase domains"/>
    <property type="match status" value="1"/>
</dbReference>
<dbReference type="HAMAP" id="MF_00558">
    <property type="entry name" value="Succ_CoA_beta"/>
    <property type="match status" value="1"/>
</dbReference>
<dbReference type="InterPro" id="IPR011761">
    <property type="entry name" value="ATP-grasp"/>
</dbReference>
<dbReference type="InterPro" id="IPR013650">
    <property type="entry name" value="ATP-grasp_succ-CoA_synth-type"/>
</dbReference>
<dbReference type="InterPro" id="IPR013815">
    <property type="entry name" value="ATP_grasp_subdomain_1"/>
</dbReference>
<dbReference type="InterPro" id="IPR017866">
    <property type="entry name" value="Succ-CoA_synthase_bsu_CS"/>
</dbReference>
<dbReference type="InterPro" id="IPR005811">
    <property type="entry name" value="SUCC_ACL_C"/>
</dbReference>
<dbReference type="InterPro" id="IPR005809">
    <property type="entry name" value="Succ_CoA_ligase-like_bsu"/>
</dbReference>
<dbReference type="InterPro" id="IPR016102">
    <property type="entry name" value="Succinyl-CoA_synth-like"/>
</dbReference>
<dbReference type="NCBIfam" id="NF001913">
    <property type="entry name" value="PRK00696.1"/>
    <property type="match status" value="1"/>
</dbReference>
<dbReference type="NCBIfam" id="TIGR01016">
    <property type="entry name" value="sucCoAbeta"/>
    <property type="match status" value="1"/>
</dbReference>
<dbReference type="PANTHER" id="PTHR11815:SF10">
    <property type="entry name" value="SUCCINATE--COA LIGASE [GDP-FORMING] SUBUNIT BETA, MITOCHONDRIAL"/>
    <property type="match status" value="1"/>
</dbReference>
<dbReference type="PANTHER" id="PTHR11815">
    <property type="entry name" value="SUCCINYL-COA SYNTHETASE BETA CHAIN"/>
    <property type="match status" value="1"/>
</dbReference>
<dbReference type="Pfam" id="PF08442">
    <property type="entry name" value="ATP-grasp_2"/>
    <property type="match status" value="1"/>
</dbReference>
<dbReference type="Pfam" id="PF00549">
    <property type="entry name" value="Ligase_CoA"/>
    <property type="match status" value="1"/>
</dbReference>
<dbReference type="PIRSF" id="PIRSF001554">
    <property type="entry name" value="SucCS_beta"/>
    <property type="match status" value="1"/>
</dbReference>
<dbReference type="SUPFAM" id="SSF56059">
    <property type="entry name" value="Glutathione synthetase ATP-binding domain-like"/>
    <property type="match status" value="1"/>
</dbReference>
<dbReference type="SUPFAM" id="SSF52210">
    <property type="entry name" value="Succinyl-CoA synthetase domains"/>
    <property type="match status" value="1"/>
</dbReference>
<dbReference type="PROSITE" id="PS50975">
    <property type="entry name" value="ATP_GRASP"/>
    <property type="match status" value="1"/>
</dbReference>
<dbReference type="PROSITE" id="PS01217">
    <property type="entry name" value="SUCCINYL_COA_LIG_3"/>
    <property type="match status" value="1"/>
</dbReference>